<feature type="chain" id="PRO_0000122789" description="Protein RecA">
    <location>
        <begin position="1"/>
        <end position="368"/>
    </location>
</feature>
<feature type="region of interest" description="Disordered" evidence="2">
    <location>
        <begin position="344"/>
        <end position="368"/>
    </location>
</feature>
<feature type="compositionally biased region" description="Polar residues" evidence="2">
    <location>
        <begin position="344"/>
        <end position="353"/>
    </location>
</feature>
<feature type="compositionally biased region" description="Acidic residues" evidence="2">
    <location>
        <begin position="354"/>
        <end position="368"/>
    </location>
</feature>
<feature type="binding site" evidence="1">
    <location>
        <begin position="80"/>
        <end position="87"/>
    </location>
    <ligand>
        <name>ATP</name>
        <dbReference type="ChEBI" id="CHEBI:30616"/>
    </ligand>
</feature>
<accession>Q9RNY0</accession>
<evidence type="ECO:0000255" key="1">
    <source>
        <dbReference type="HAMAP-Rule" id="MF_00268"/>
    </source>
</evidence>
<evidence type="ECO:0000256" key="2">
    <source>
        <dbReference type="SAM" id="MobiDB-lite"/>
    </source>
</evidence>
<reference key="1">
    <citation type="submission" date="1999-08" db="EMBL/GenBank/DDBJ databases">
        <authorList>
            <person name="Pogson C.A."/>
        </authorList>
    </citation>
    <scope>NUCLEOTIDE SEQUENCE [GENOMIC DNA]</scope>
</reference>
<keyword id="KW-0067">ATP-binding</keyword>
<keyword id="KW-0963">Cytoplasm</keyword>
<keyword id="KW-0227">DNA damage</keyword>
<keyword id="KW-0233">DNA recombination</keyword>
<keyword id="KW-0234">DNA repair</keyword>
<keyword id="KW-0238">DNA-binding</keyword>
<keyword id="KW-0547">Nucleotide-binding</keyword>
<keyword id="KW-0742">SOS response</keyword>
<organism>
    <name type="scientific">Mannheimia haemolytica</name>
    <name type="common">Pasteurella haemolytica</name>
    <dbReference type="NCBI Taxonomy" id="75985"/>
    <lineage>
        <taxon>Bacteria</taxon>
        <taxon>Pseudomonadati</taxon>
        <taxon>Pseudomonadota</taxon>
        <taxon>Gammaproteobacteria</taxon>
        <taxon>Pasteurellales</taxon>
        <taxon>Pasteurellaceae</taxon>
        <taxon>Mannheimia</taxon>
    </lineage>
</organism>
<name>RECA_MANHA</name>
<protein>
    <recommendedName>
        <fullName evidence="1">Protein RecA</fullName>
    </recommendedName>
    <alternativeName>
        <fullName evidence="1">Recombinase A</fullName>
    </alternativeName>
</protein>
<sequence>MAEKKSQKNTPVKQIDPEQKEKALAAALAQIEKQFGKGSIMKLGDTQALDIEAVSTGSLGLDSALGIGGLPMGRIVEIYGPESSGKTTLTLSVVAQAQKNGKTCAFIDAEHALDPIYARKLGVDTDGLLISQPDNGEQALEICDALVRSGAVDVIIVDSVAALTPKAEIEGDMGDSHMGLQARLMSQALRKLTANIKATNCLVIFINQIRMKIGVMFGNPETTTGGNALKFYASVRLDIRRSGVVKDGDEVIGSETKVKIVKNKVAPPFREVQFDIMYGEGIARMNELLILAESHGFINKAGAWFSYEGEKIGQGKNNAIKWLKEHPEVASKIEQDIRNLLISNPTFTATPDSENADNADDEFSEEEL</sequence>
<proteinExistence type="inferred from homology"/>
<comment type="function">
    <text evidence="1">Can catalyze the hydrolysis of ATP in the presence of single-stranded DNA, the ATP-dependent uptake of single-stranded DNA by duplex DNA, and the ATP-dependent hybridization of homologous single-stranded DNAs. It interacts with LexA causing its activation and leading to its autocatalytic cleavage.</text>
</comment>
<comment type="subcellular location">
    <subcellularLocation>
        <location evidence="1">Cytoplasm</location>
    </subcellularLocation>
</comment>
<comment type="similarity">
    <text evidence="1">Belongs to the RecA family.</text>
</comment>
<gene>
    <name evidence="1" type="primary">recA</name>
</gene>
<dbReference type="EMBL" id="AF176376">
    <property type="protein sequence ID" value="AAD53288.1"/>
    <property type="molecule type" value="Genomic_DNA"/>
</dbReference>
<dbReference type="RefSeq" id="WP_006249587.1">
    <property type="nucleotide sequence ID" value="NZ_VAJK01000001.1"/>
</dbReference>
<dbReference type="SMR" id="Q9RNY0"/>
<dbReference type="STRING" id="75985.WC39_03080"/>
<dbReference type="GeneID" id="67368237"/>
<dbReference type="OrthoDB" id="9776733at2"/>
<dbReference type="GO" id="GO:0005829">
    <property type="term" value="C:cytosol"/>
    <property type="evidence" value="ECO:0007669"/>
    <property type="project" value="TreeGrafter"/>
</dbReference>
<dbReference type="GO" id="GO:0005524">
    <property type="term" value="F:ATP binding"/>
    <property type="evidence" value="ECO:0007669"/>
    <property type="project" value="UniProtKB-UniRule"/>
</dbReference>
<dbReference type="GO" id="GO:0016887">
    <property type="term" value="F:ATP hydrolysis activity"/>
    <property type="evidence" value="ECO:0007669"/>
    <property type="project" value="InterPro"/>
</dbReference>
<dbReference type="GO" id="GO:0140664">
    <property type="term" value="F:ATP-dependent DNA damage sensor activity"/>
    <property type="evidence" value="ECO:0007669"/>
    <property type="project" value="InterPro"/>
</dbReference>
<dbReference type="GO" id="GO:0003684">
    <property type="term" value="F:damaged DNA binding"/>
    <property type="evidence" value="ECO:0007669"/>
    <property type="project" value="UniProtKB-UniRule"/>
</dbReference>
<dbReference type="GO" id="GO:0003697">
    <property type="term" value="F:single-stranded DNA binding"/>
    <property type="evidence" value="ECO:0007669"/>
    <property type="project" value="UniProtKB-UniRule"/>
</dbReference>
<dbReference type="GO" id="GO:0006310">
    <property type="term" value="P:DNA recombination"/>
    <property type="evidence" value="ECO:0007669"/>
    <property type="project" value="UniProtKB-UniRule"/>
</dbReference>
<dbReference type="GO" id="GO:0006281">
    <property type="term" value="P:DNA repair"/>
    <property type="evidence" value="ECO:0007669"/>
    <property type="project" value="UniProtKB-UniRule"/>
</dbReference>
<dbReference type="GO" id="GO:0009432">
    <property type="term" value="P:SOS response"/>
    <property type="evidence" value="ECO:0007669"/>
    <property type="project" value="UniProtKB-UniRule"/>
</dbReference>
<dbReference type="CDD" id="cd00983">
    <property type="entry name" value="RecA"/>
    <property type="match status" value="1"/>
</dbReference>
<dbReference type="FunFam" id="3.40.50.300:FF:000087">
    <property type="entry name" value="Recombinase RecA"/>
    <property type="match status" value="1"/>
</dbReference>
<dbReference type="Gene3D" id="3.40.50.300">
    <property type="entry name" value="P-loop containing nucleotide triphosphate hydrolases"/>
    <property type="match status" value="1"/>
</dbReference>
<dbReference type="HAMAP" id="MF_00268">
    <property type="entry name" value="RecA"/>
    <property type="match status" value="1"/>
</dbReference>
<dbReference type="InterPro" id="IPR003593">
    <property type="entry name" value="AAA+_ATPase"/>
</dbReference>
<dbReference type="InterPro" id="IPR013765">
    <property type="entry name" value="DNA_recomb/repair_RecA"/>
</dbReference>
<dbReference type="InterPro" id="IPR020584">
    <property type="entry name" value="DNA_recomb/repair_RecA_CS"/>
</dbReference>
<dbReference type="InterPro" id="IPR027417">
    <property type="entry name" value="P-loop_NTPase"/>
</dbReference>
<dbReference type="InterPro" id="IPR049261">
    <property type="entry name" value="RecA-like_C"/>
</dbReference>
<dbReference type="InterPro" id="IPR049428">
    <property type="entry name" value="RecA-like_N"/>
</dbReference>
<dbReference type="InterPro" id="IPR020588">
    <property type="entry name" value="RecA_ATP-bd"/>
</dbReference>
<dbReference type="InterPro" id="IPR023400">
    <property type="entry name" value="RecA_C_sf"/>
</dbReference>
<dbReference type="InterPro" id="IPR020587">
    <property type="entry name" value="RecA_monomer-monomer_interface"/>
</dbReference>
<dbReference type="NCBIfam" id="TIGR02012">
    <property type="entry name" value="tigrfam_recA"/>
    <property type="match status" value="1"/>
</dbReference>
<dbReference type="PANTHER" id="PTHR45900:SF1">
    <property type="entry name" value="MITOCHONDRIAL DNA REPAIR PROTEIN RECA HOMOLOG-RELATED"/>
    <property type="match status" value="1"/>
</dbReference>
<dbReference type="PANTHER" id="PTHR45900">
    <property type="entry name" value="RECA"/>
    <property type="match status" value="1"/>
</dbReference>
<dbReference type="Pfam" id="PF00154">
    <property type="entry name" value="RecA"/>
    <property type="match status" value="1"/>
</dbReference>
<dbReference type="Pfam" id="PF21096">
    <property type="entry name" value="RecA_C"/>
    <property type="match status" value="1"/>
</dbReference>
<dbReference type="PRINTS" id="PR00142">
    <property type="entry name" value="RECA"/>
</dbReference>
<dbReference type="SMART" id="SM00382">
    <property type="entry name" value="AAA"/>
    <property type="match status" value="1"/>
</dbReference>
<dbReference type="SUPFAM" id="SSF52540">
    <property type="entry name" value="P-loop containing nucleoside triphosphate hydrolases"/>
    <property type="match status" value="1"/>
</dbReference>
<dbReference type="SUPFAM" id="SSF54752">
    <property type="entry name" value="RecA protein, C-terminal domain"/>
    <property type="match status" value="1"/>
</dbReference>
<dbReference type="PROSITE" id="PS00321">
    <property type="entry name" value="RECA_1"/>
    <property type="match status" value="1"/>
</dbReference>
<dbReference type="PROSITE" id="PS50162">
    <property type="entry name" value="RECA_2"/>
    <property type="match status" value="1"/>
</dbReference>
<dbReference type="PROSITE" id="PS50163">
    <property type="entry name" value="RECA_3"/>
    <property type="match status" value="1"/>
</dbReference>